<dbReference type="EMBL" id="OQ473091">
    <property type="protein sequence ID" value="WDQ26747.1"/>
    <property type="molecule type" value="mRNA"/>
</dbReference>
<dbReference type="GO" id="GO:0005576">
    <property type="term" value="C:extracellular region"/>
    <property type="evidence" value="ECO:0007669"/>
    <property type="project" value="UniProtKB-SubCell"/>
</dbReference>
<dbReference type="GO" id="GO:0090729">
    <property type="term" value="F:toxin activity"/>
    <property type="evidence" value="ECO:0007669"/>
    <property type="project" value="UniProtKB-KW"/>
</dbReference>
<reference key="1">
    <citation type="journal article" date="2023" name="Biochem. Pharmacol.">
        <title>Venom composition and bioactive RF-amide peptide toxins of the saddleback caterpillar, Acharia stimulea (Lepidoptera: Limacodidae).</title>
        <authorList>
            <person name="Goudarzi M.H."/>
            <person name="Eagles D.A."/>
            <person name="Lim J."/>
            <person name="Biggs K.A."/>
            <person name="Kotze A.C."/>
            <person name="Ruffell A.P."/>
            <person name="Fairlie D.P."/>
            <person name="King G.F."/>
            <person name="Walker A.A."/>
        </authorList>
    </citation>
    <scope>NUCLEOTIDE SEQUENCE [LARGE SCALE MRNA]</scope>
    <scope>FUNCTION</scope>
    <scope>SUBCELLULAR LOCATION</scope>
    <scope>SYNTHESIS OF 20-32</scope>
    <scope>PROBABLE AMIDATION AT PHE-32</scope>
    <scope>TOXIC DOSE</scope>
</reference>
<accession>P0DX48</accession>
<protein>
    <recommendedName>
        <fullName evidence="3">U-limacoditoxin(13)-As11</fullName>
        <shortName evidence="3">U-LCTX(13)-As11</shortName>
    </recommendedName>
</protein>
<sequence length="33" mass="3411">MFKLLLVLALTMLAQSALAGGGSKSTDTVIRFG</sequence>
<feature type="signal peptide" evidence="1">
    <location>
        <begin position="1"/>
        <end position="19"/>
    </location>
</feature>
<feature type="peptide" id="PRO_0000458999" description="U-limacoditoxin(13)-As11" evidence="2 4">
    <location>
        <begin position="20"/>
        <end position="32"/>
    </location>
</feature>
<feature type="modified residue" description="Phenylalanine amide" evidence="2">
    <location>
        <position position="32"/>
    </location>
</feature>
<comment type="function">
    <text evidence="2">Is toxic when injected into Drosophila melanogaster. Also shows a low anthelmintic activity against the parasitic nematode H.contortus (drug susceptible Kirby isolate).</text>
</comment>
<comment type="subcellular location">
    <subcellularLocation>
        <location evidence="2">Secreted</location>
    </subcellularLocation>
</comment>
<comment type="tissue specificity">
    <text evidence="5">Expressed by the venom secretory cell of the spine. The spine is a cuticular structure containing a single large nucleated venom-secreting cell at its base. It is an independent unit capable of producing, storing and injecting venom. On the back of A.stimulea caterpillars, spines are grouped together by 50 to 100 to form scoli, of which there are eight.</text>
</comment>
<comment type="developmental stage">
    <text evidence="4">Only secreted by larvae. Adult moth do not have spines.</text>
</comment>
<comment type="toxic dose">
    <text evidence="2">LD(50) is 9.4 nmol/g at 2 hours after injection into Drosophila melanogaster. LD(50) is 4.0 nmol/g at 24 hours after injection into the same species.</text>
</comment>
<comment type="miscellaneous">
    <text evidence="2">Negative results: has no effect on human neuropeptide FF receptor 1 (NPFFR1), NPFFR2 and kisspeptin receptor 1 (KISS1R). Has mild effect on ASIC1a channels (8% inhibition at 10 uM) and no effect on ASIC1b channels.</text>
</comment>
<comment type="similarity">
    <text evidence="4">Belongs to the FARP (FMRFamide related peptide) family.</text>
</comment>
<evidence type="ECO:0000255" key="1"/>
<evidence type="ECO:0000269" key="2">
    <source>
    </source>
</evidence>
<evidence type="ECO:0000303" key="3">
    <source>
    </source>
</evidence>
<evidence type="ECO:0000305" key="4"/>
<evidence type="ECO:0000305" key="5">
    <source>
    </source>
</evidence>
<organism>
    <name type="scientific">Acharia stimulea</name>
    <name type="common">Saddleback caterpillar moth</name>
    <name type="synonym">Sibine stimulea</name>
    <dbReference type="NCBI Taxonomy" id="691692"/>
    <lineage>
        <taxon>Eukaryota</taxon>
        <taxon>Metazoa</taxon>
        <taxon>Ecdysozoa</taxon>
        <taxon>Arthropoda</taxon>
        <taxon>Hexapoda</taxon>
        <taxon>Insecta</taxon>
        <taxon>Pterygota</taxon>
        <taxon>Neoptera</taxon>
        <taxon>Endopterygota</taxon>
        <taxon>Lepidoptera</taxon>
        <taxon>Glossata</taxon>
        <taxon>Ditrysia</taxon>
        <taxon>Zygaenoidea</taxon>
        <taxon>Limacodidae</taxon>
        <taxon>Acharia</taxon>
    </lineage>
</organism>
<name>RF11_ACHST</name>
<proteinExistence type="evidence at protein level"/>
<keyword id="KW-0027">Amidation</keyword>
<keyword id="KW-0964">Secreted</keyword>
<keyword id="KW-0732">Signal</keyword>
<keyword id="KW-0800">Toxin</keyword>